<feature type="chain" id="PRO_0000218521" description="Pre-mRNA-splicing factor SPP2">
    <location>
        <begin position="1"/>
        <end position="169"/>
    </location>
</feature>
<feature type="region of interest" description="Disordered" evidence="2">
    <location>
        <begin position="1"/>
        <end position="28"/>
    </location>
</feature>
<accession>Q6FMB1</accession>
<sequence length="169" mass="19046">MFSLKLGKNKKKKKVPKGDSELFGSEASVDDKVSLTQYNYADEREKEKPKKRKIELATAESETIALKRAKNNIGDDSIVQELEALPEKVEDKEYEEMPVEEFGAAMLRGMGWTDENELEDSKSHSKKLPHEQIHPEGLGIGAKSQEMSNPVSVKDLVNDFMPVKKVPKQ</sequence>
<protein>
    <recommendedName>
        <fullName>Pre-mRNA-splicing factor SPP2</fullName>
    </recommendedName>
</protein>
<reference key="1">
    <citation type="journal article" date="2004" name="Nature">
        <title>Genome evolution in yeasts.</title>
        <authorList>
            <person name="Dujon B."/>
            <person name="Sherman D."/>
            <person name="Fischer G."/>
            <person name="Durrens P."/>
            <person name="Casaregola S."/>
            <person name="Lafontaine I."/>
            <person name="de Montigny J."/>
            <person name="Marck C."/>
            <person name="Neuveglise C."/>
            <person name="Talla E."/>
            <person name="Goffard N."/>
            <person name="Frangeul L."/>
            <person name="Aigle M."/>
            <person name="Anthouard V."/>
            <person name="Babour A."/>
            <person name="Barbe V."/>
            <person name="Barnay S."/>
            <person name="Blanchin S."/>
            <person name="Beckerich J.-M."/>
            <person name="Beyne E."/>
            <person name="Bleykasten C."/>
            <person name="Boisrame A."/>
            <person name="Boyer J."/>
            <person name="Cattolico L."/>
            <person name="Confanioleri F."/>
            <person name="de Daruvar A."/>
            <person name="Despons L."/>
            <person name="Fabre E."/>
            <person name="Fairhead C."/>
            <person name="Ferry-Dumazet H."/>
            <person name="Groppi A."/>
            <person name="Hantraye F."/>
            <person name="Hennequin C."/>
            <person name="Jauniaux N."/>
            <person name="Joyet P."/>
            <person name="Kachouri R."/>
            <person name="Kerrest A."/>
            <person name="Koszul R."/>
            <person name="Lemaire M."/>
            <person name="Lesur I."/>
            <person name="Ma L."/>
            <person name="Muller H."/>
            <person name="Nicaud J.-M."/>
            <person name="Nikolski M."/>
            <person name="Oztas S."/>
            <person name="Ozier-Kalogeropoulos O."/>
            <person name="Pellenz S."/>
            <person name="Potier S."/>
            <person name="Richard G.-F."/>
            <person name="Straub M.-L."/>
            <person name="Suleau A."/>
            <person name="Swennen D."/>
            <person name="Tekaia F."/>
            <person name="Wesolowski-Louvel M."/>
            <person name="Westhof E."/>
            <person name="Wirth B."/>
            <person name="Zeniou-Meyer M."/>
            <person name="Zivanovic Y."/>
            <person name="Bolotin-Fukuhara M."/>
            <person name="Thierry A."/>
            <person name="Bouchier C."/>
            <person name="Caudron B."/>
            <person name="Scarpelli C."/>
            <person name="Gaillardin C."/>
            <person name="Weissenbach J."/>
            <person name="Wincker P."/>
            <person name="Souciet J.-L."/>
        </authorList>
    </citation>
    <scope>NUCLEOTIDE SEQUENCE [LARGE SCALE GENOMIC DNA]</scope>
    <source>
        <strain>ATCC 2001 / BCRC 20586 / JCM 3761 / NBRC 0622 / NRRL Y-65 / CBS 138</strain>
    </source>
</reference>
<dbReference type="EMBL" id="CR380957">
    <property type="protein sequence ID" value="CAG61596.1"/>
    <property type="molecule type" value="Genomic_DNA"/>
</dbReference>
<dbReference type="RefSeq" id="XP_448633.1">
    <property type="nucleotide sequence ID" value="XM_448633.1"/>
</dbReference>
<dbReference type="FunCoup" id="Q6FMB1">
    <property type="interactions" value="88"/>
</dbReference>
<dbReference type="STRING" id="284593.Q6FMB1"/>
<dbReference type="EnsemblFungi" id="CAGL0K09504g-T">
    <property type="protein sequence ID" value="CAGL0K09504g-T-p1"/>
    <property type="gene ID" value="CAGL0K09504g"/>
</dbReference>
<dbReference type="KEGG" id="cgr:2890235"/>
<dbReference type="CGD" id="CAL0134945">
    <property type="gene designation" value="CAGL0K09504g"/>
</dbReference>
<dbReference type="VEuPathDB" id="FungiDB:B1J91_K09504g"/>
<dbReference type="VEuPathDB" id="FungiDB:CAGL0K09504g"/>
<dbReference type="eggNOG" id="ENOG502S8BR">
    <property type="taxonomic scope" value="Eukaryota"/>
</dbReference>
<dbReference type="HOGENOM" id="CLU_110336_0_0_1"/>
<dbReference type="InParanoid" id="Q6FMB1"/>
<dbReference type="Proteomes" id="UP000002428">
    <property type="component" value="Chromosome K"/>
</dbReference>
<dbReference type="GO" id="GO:0005681">
    <property type="term" value="C:spliceosomal complex"/>
    <property type="evidence" value="ECO:0007669"/>
    <property type="project" value="UniProtKB-KW"/>
</dbReference>
<dbReference type="GO" id="GO:0000398">
    <property type="term" value="P:mRNA splicing, via spliceosome"/>
    <property type="evidence" value="ECO:0007669"/>
    <property type="project" value="InterPro"/>
</dbReference>
<dbReference type="InterPro" id="IPR045166">
    <property type="entry name" value="Spp2-like"/>
</dbReference>
<dbReference type="InterPro" id="IPR026822">
    <property type="entry name" value="Spp2/MOS2_G-patch"/>
</dbReference>
<dbReference type="PANTHER" id="PTHR15818">
    <property type="entry name" value="G PATCH AND KOW-CONTAINING"/>
    <property type="match status" value="1"/>
</dbReference>
<dbReference type="PANTHER" id="PTHR15818:SF2">
    <property type="entry name" value="G-PATCH DOMAIN AND KOW MOTIFS-CONTAINING PROTEIN"/>
    <property type="match status" value="1"/>
</dbReference>
<dbReference type="Pfam" id="PF12656">
    <property type="entry name" value="G-patch_2"/>
    <property type="match status" value="1"/>
</dbReference>
<proteinExistence type="inferred from homology"/>
<organism>
    <name type="scientific">Candida glabrata (strain ATCC 2001 / BCRC 20586 / JCM 3761 / NBRC 0622 / NRRL Y-65 / CBS 138)</name>
    <name type="common">Yeast</name>
    <name type="synonym">Nakaseomyces glabratus</name>
    <dbReference type="NCBI Taxonomy" id="284593"/>
    <lineage>
        <taxon>Eukaryota</taxon>
        <taxon>Fungi</taxon>
        <taxon>Dikarya</taxon>
        <taxon>Ascomycota</taxon>
        <taxon>Saccharomycotina</taxon>
        <taxon>Saccharomycetes</taxon>
        <taxon>Saccharomycetales</taxon>
        <taxon>Saccharomycetaceae</taxon>
        <taxon>Nakaseomyces</taxon>
    </lineage>
</organism>
<keyword id="KW-0507">mRNA processing</keyword>
<keyword id="KW-0508">mRNA splicing</keyword>
<keyword id="KW-0539">Nucleus</keyword>
<keyword id="KW-1185">Reference proteome</keyword>
<keyword id="KW-0747">Spliceosome</keyword>
<evidence type="ECO:0000250" key="1"/>
<evidence type="ECO:0000256" key="2">
    <source>
        <dbReference type="SAM" id="MobiDB-lite"/>
    </source>
</evidence>
<evidence type="ECO:0000305" key="3"/>
<gene>
    <name type="primary">SPP2</name>
    <name type="ordered locus">CAGL0K09504g</name>
</gene>
<name>SPP2_CANGA</name>
<comment type="function">
    <text evidence="1">Involved in spliceosome maturation and the first step of pre-mRNA splicing.</text>
</comment>
<comment type="subunit">
    <text evidence="1">Associated with the spliceosome.</text>
</comment>
<comment type="subcellular location">
    <subcellularLocation>
        <location evidence="1">Nucleus</location>
    </subcellularLocation>
</comment>
<comment type="similarity">
    <text evidence="3">Belongs to the SPP2 family.</text>
</comment>